<accession>O07564</accession>
<accession>Q796S2</accession>
<dbReference type="EC" id="1.1.1.361"/>
<dbReference type="EMBL" id="Y14081">
    <property type="protein sequence ID" value="CAA74472.1"/>
    <property type="molecule type" value="Genomic_DNA"/>
</dbReference>
<dbReference type="EMBL" id="AL009126">
    <property type="protein sequence ID" value="CAB12893.2"/>
    <property type="molecule type" value="Genomic_DNA"/>
</dbReference>
<dbReference type="PIR" id="A69834">
    <property type="entry name" value="A69834"/>
</dbReference>
<dbReference type="RefSeq" id="NP_388934.2">
    <property type="nucleotide sequence ID" value="NC_000964.3"/>
</dbReference>
<dbReference type="RefSeq" id="WP_003244701.1">
    <property type="nucleotide sequence ID" value="NZ_OZ025638.1"/>
</dbReference>
<dbReference type="SMR" id="O07564"/>
<dbReference type="FunCoup" id="O07564">
    <property type="interactions" value="33"/>
</dbReference>
<dbReference type="STRING" id="224308.BSU10530"/>
<dbReference type="PaxDb" id="224308-BSU10530"/>
<dbReference type="DNASU" id="936337"/>
<dbReference type="EnsemblBacteria" id="CAB12893">
    <property type="protein sequence ID" value="CAB12893"/>
    <property type="gene ID" value="BSU_10530"/>
</dbReference>
<dbReference type="GeneID" id="936337"/>
<dbReference type="KEGG" id="bsu:BSU10530"/>
<dbReference type="PATRIC" id="fig|224308.179.peg.1132"/>
<dbReference type="eggNOG" id="COG0673">
    <property type="taxonomic scope" value="Bacteria"/>
</dbReference>
<dbReference type="InParanoid" id="O07564"/>
<dbReference type="OrthoDB" id="9815825at2"/>
<dbReference type="PhylomeDB" id="O07564"/>
<dbReference type="BioCyc" id="BSUB:BSU10530-MONOMER"/>
<dbReference type="BioCyc" id="MetaCyc:BSU10530-MONOMER"/>
<dbReference type="UniPathway" id="UPA01036"/>
<dbReference type="Proteomes" id="UP000001570">
    <property type="component" value="Chromosome"/>
</dbReference>
<dbReference type="GO" id="GO:0005829">
    <property type="term" value="C:cytosol"/>
    <property type="evidence" value="ECO:0000318"/>
    <property type="project" value="GO_Central"/>
</dbReference>
<dbReference type="GO" id="GO:0103074">
    <property type="term" value="F:glucose-6-phosphate 3-dehydrogenase activity"/>
    <property type="evidence" value="ECO:0007669"/>
    <property type="project" value="UniProtKB-EC"/>
</dbReference>
<dbReference type="GO" id="GO:0000166">
    <property type="term" value="F:nucleotide binding"/>
    <property type="evidence" value="ECO:0007669"/>
    <property type="project" value="InterPro"/>
</dbReference>
<dbReference type="GO" id="GO:0016616">
    <property type="term" value="F:oxidoreductase activity, acting on the CH-OH group of donors, NAD or NADP as acceptor"/>
    <property type="evidence" value="ECO:0000314"/>
    <property type="project" value="UniProtKB"/>
</dbReference>
<dbReference type="GO" id="GO:0102497">
    <property type="term" value="F:scyllo-inositol dehydrogenase (NADP+) activity"/>
    <property type="evidence" value="ECO:0000318"/>
    <property type="project" value="GO_Central"/>
</dbReference>
<dbReference type="GO" id="GO:0017000">
    <property type="term" value="P:antibiotic biosynthetic process"/>
    <property type="evidence" value="ECO:0000314"/>
    <property type="project" value="UniProtKB"/>
</dbReference>
<dbReference type="Gene3D" id="3.30.360.10">
    <property type="entry name" value="Dihydrodipicolinate Reductase, domain 2"/>
    <property type="match status" value="1"/>
</dbReference>
<dbReference type="Gene3D" id="3.40.50.720">
    <property type="entry name" value="NAD(P)-binding Rossmann-like Domain"/>
    <property type="match status" value="1"/>
</dbReference>
<dbReference type="InterPro" id="IPR004104">
    <property type="entry name" value="Gfo/Idh/MocA-like_OxRdtase_C"/>
</dbReference>
<dbReference type="InterPro" id="IPR000683">
    <property type="entry name" value="Gfo/Idh/MocA-like_OxRdtase_N"/>
</dbReference>
<dbReference type="InterPro" id="IPR051317">
    <property type="entry name" value="Gfo/Idh/MocA_oxidoreduct"/>
</dbReference>
<dbReference type="InterPro" id="IPR036291">
    <property type="entry name" value="NAD(P)-bd_dom_sf"/>
</dbReference>
<dbReference type="PANTHER" id="PTHR43708">
    <property type="entry name" value="CONSERVED EXPRESSED OXIDOREDUCTASE (EUROFUNG)"/>
    <property type="match status" value="1"/>
</dbReference>
<dbReference type="PANTHER" id="PTHR43708:SF5">
    <property type="entry name" value="CONSERVED EXPRESSED OXIDOREDUCTASE (EUROFUNG)-RELATED"/>
    <property type="match status" value="1"/>
</dbReference>
<dbReference type="Pfam" id="PF01408">
    <property type="entry name" value="GFO_IDH_MocA"/>
    <property type="match status" value="1"/>
</dbReference>
<dbReference type="Pfam" id="PF02894">
    <property type="entry name" value="GFO_IDH_MocA_C"/>
    <property type="match status" value="1"/>
</dbReference>
<dbReference type="SUPFAM" id="SSF55347">
    <property type="entry name" value="Glyceraldehyde-3-phosphate dehydrogenase-like, C-terminal domain"/>
    <property type="match status" value="1"/>
</dbReference>
<dbReference type="SUPFAM" id="SSF51735">
    <property type="entry name" value="NAD(P)-binding Rossmann-fold domains"/>
    <property type="match status" value="1"/>
</dbReference>
<gene>
    <name type="primary">ntdC</name>
    <name type="synonym">yhjJ</name>
    <name type="ordered locus">BSU10530</name>
</gene>
<protein>
    <recommendedName>
        <fullName>Glucose-6-phosphate 3-dehydrogenase</fullName>
        <ecNumber>1.1.1.361</ecNumber>
    </recommendedName>
</protein>
<sequence>MKKIGIIGAGGIARAHATALSTIKNAELVGVYDINQQNAESFVKTFGGKSFENVDELIDASEGLIVASPNFCHKEHALQALGKHKHVLCEKPMAISLEEASIMKDTAERLSVRASMGFNYRYLSYVNILKSLIINNELGNILSIKVHFKKNSALRRKKFTWRDDANSKKTSGSLGDLGIHLIDMVWYLFESDFITESVRAKMNTNVKTKEDKQVLVDDYAEIYGQLKNKVFVNIITSKCSVPEDCGFSIEVVGHKKEFKYHTGNPHVYKLIDGLNVVDCPVPQSLLNDPPNEFYGWADSFRSELINWIASTQNDWVEIPSFSDGFRSQEVLEMFFEKDSNSQPMSVSAVN</sequence>
<organism>
    <name type="scientific">Bacillus subtilis (strain 168)</name>
    <dbReference type="NCBI Taxonomy" id="224308"/>
    <lineage>
        <taxon>Bacteria</taxon>
        <taxon>Bacillati</taxon>
        <taxon>Bacillota</taxon>
        <taxon>Bacilli</taxon>
        <taxon>Bacillales</taxon>
        <taxon>Bacillaceae</taxon>
        <taxon>Bacillus</taxon>
    </lineage>
</organism>
<reference key="1">
    <citation type="journal article" date="1998" name="Microbiology">
        <title>The 172 kb prkA-addAB region from 83 degrees to 97 degrees of the Bacillus subtilis chromosome contains several dysfunctional genes, the glyB marker, many genes encoding transporter proteins, and the ubiquitous hit gene.</title>
        <authorList>
            <person name="Noback M.A."/>
            <person name="Holsappel S."/>
            <person name="Kiewiet R."/>
            <person name="Terpstra P."/>
            <person name="Wambutt R."/>
            <person name="Wedler H."/>
            <person name="Venema G."/>
            <person name="Bron S."/>
        </authorList>
    </citation>
    <scope>NUCLEOTIDE SEQUENCE [GENOMIC DNA]</scope>
    <source>
        <strain>168</strain>
    </source>
</reference>
<reference key="2">
    <citation type="journal article" date="1997" name="Nature">
        <title>The complete genome sequence of the Gram-positive bacterium Bacillus subtilis.</title>
        <authorList>
            <person name="Kunst F."/>
            <person name="Ogasawara N."/>
            <person name="Moszer I."/>
            <person name="Albertini A.M."/>
            <person name="Alloni G."/>
            <person name="Azevedo V."/>
            <person name="Bertero M.G."/>
            <person name="Bessieres P."/>
            <person name="Bolotin A."/>
            <person name="Borchert S."/>
            <person name="Borriss R."/>
            <person name="Boursier L."/>
            <person name="Brans A."/>
            <person name="Braun M."/>
            <person name="Brignell S.C."/>
            <person name="Bron S."/>
            <person name="Brouillet S."/>
            <person name="Bruschi C.V."/>
            <person name="Caldwell B."/>
            <person name="Capuano V."/>
            <person name="Carter N.M."/>
            <person name="Choi S.-K."/>
            <person name="Codani J.-J."/>
            <person name="Connerton I.F."/>
            <person name="Cummings N.J."/>
            <person name="Daniel R.A."/>
            <person name="Denizot F."/>
            <person name="Devine K.M."/>
            <person name="Duesterhoeft A."/>
            <person name="Ehrlich S.D."/>
            <person name="Emmerson P.T."/>
            <person name="Entian K.-D."/>
            <person name="Errington J."/>
            <person name="Fabret C."/>
            <person name="Ferrari E."/>
            <person name="Foulger D."/>
            <person name="Fritz C."/>
            <person name="Fujita M."/>
            <person name="Fujita Y."/>
            <person name="Fuma S."/>
            <person name="Galizzi A."/>
            <person name="Galleron N."/>
            <person name="Ghim S.-Y."/>
            <person name="Glaser P."/>
            <person name="Goffeau A."/>
            <person name="Golightly E.J."/>
            <person name="Grandi G."/>
            <person name="Guiseppi G."/>
            <person name="Guy B.J."/>
            <person name="Haga K."/>
            <person name="Haiech J."/>
            <person name="Harwood C.R."/>
            <person name="Henaut A."/>
            <person name="Hilbert H."/>
            <person name="Holsappel S."/>
            <person name="Hosono S."/>
            <person name="Hullo M.-F."/>
            <person name="Itaya M."/>
            <person name="Jones L.-M."/>
            <person name="Joris B."/>
            <person name="Karamata D."/>
            <person name="Kasahara Y."/>
            <person name="Klaerr-Blanchard M."/>
            <person name="Klein C."/>
            <person name="Kobayashi Y."/>
            <person name="Koetter P."/>
            <person name="Koningstein G."/>
            <person name="Krogh S."/>
            <person name="Kumano M."/>
            <person name="Kurita K."/>
            <person name="Lapidus A."/>
            <person name="Lardinois S."/>
            <person name="Lauber J."/>
            <person name="Lazarevic V."/>
            <person name="Lee S.-M."/>
            <person name="Levine A."/>
            <person name="Liu H."/>
            <person name="Masuda S."/>
            <person name="Mauel C."/>
            <person name="Medigue C."/>
            <person name="Medina N."/>
            <person name="Mellado R.P."/>
            <person name="Mizuno M."/>
            <person name="Moestl D."/>
            <person name="Nakai S."/>
            <person name="Noback M."/>
            <person name="Noone D."/>
            <person name="O'Reilly M."/>
            <person name="Ogawa K."/>
            <person name="Ogiwara A."/>
            <person name="Oudega B."/>
            <person name="Park S.-H."/>
            <person name="Parro V."/>
            <person name="Pohl T.M."/>
            <person name="Portetelle D."/>
            <person name="Porwollik S."/>
            <person name="Prescott A.M."/>
            <person name="Presecan E."/>
            <person name="Pujic P."/>
            <person name="Purnelle B."/>
            <person name="Rapoport G."/>
            <person name="Rey M."/>
            <person name="Reynolds S."/>
            <person name="Rieger M."/>
            <person name="Rivolta C."/>
            <person name="Rocha E."/>
            <person name="Roche B."/>
            <person name="Rose M."/>
            <person name="Sadaie Y."/>
            <person name="Sato T."/>
            <person name="Scanlan E."/>
            <person name="Schleich S."/>
            <person name="Schroeter R."/>
            <person name="Scoffone F."/>
            <person name="Sekiguchi J."/>
            <person name="Sekowska A."/>
            <person name="Seror S.J."/>
            <person name="Serror P."/>
            <person name="Shin B.-S."/>
            <person name="Soldo B."/>
            <person name="Sorokin A."/>
            <person name="Tacconi E."/>
            <person name="Takagi T."/>
            <person name="Takahashi H."/>
            <person name="Takemaru K."/>
            <person name="Takeuchi M."/>
            <person name="Tamakoshi A."/>
            <person name="Tanaka T."/>
            <person name="Terpstra P."/>
            <person name="Tognoni A."/>
            <person name="Tosato V."/>
            <person name="Uchiyama S."/>
            <person name="Vandenbol M."/>
            <person name="Vannier F."/>
            <person name="Vassarotti A."/>
            <person name="Viari A."/>
            <person name="Wambutt R."/>
            <person name="Wedler E."/>
            <person name="Wedler H."/>
            <person name="Weitzenegger T."/>
            <person name="Winters P."/>
            <person name="Wipat A."/>
            <person name="Yamamoto H."/>
            <person name="Yamane K."/>
            <person name="Yasumoto K."/>
            <person name="Yata K."/>
            <person name="Yoshida K."/>
            <person name="Yoshikawa H.-F."/>
            <person name="Zumstein E."/>
            <person name="Yoshikawa H."/>
            <person name="Danchin A."/>
        </authorList>
    </citation>
    <scope>NUCLEOTIDE SEQUENCE [LARGE SCALE GENOMIC DNA]</scope>
    <source>
        <strain>168</strain>
    </source>
</reference>
<reference key="3">
    <citation type="journal article" date="2009" name="Microbiology">
        <title>From a consortium sequence to a unified sequence: the Bacillus subtilis 168 reference genome a decade later.</title>
        <authorList>
            <person name="Barbe V."/>
            <person name="Cruveiller S."/>
            <person name="Kunst F."/>
            <person name="Lenoble P."/>
            <person name="Meurice G."/>
            <person name="Sekowska A."/>
            <person name="Vallenet D."/>
            <person name="Wang T."/>
            <person name="Moszer I."/>
            <person name="Medigue C."/>
            <person name="Danchin A."/>
        </authorList>
    </citation>
    <scope>SEQUENCE REVISION TO 227</scope>
</reference>
<reference key="4">
    <citation type="journal article" date="2004" name="J. Biol. Chem.">
        <title>RNA polymerase mutation activates the production of a dormant antibiotic 3,3'-neotrehalosadiamine via an autoinduction mechanism in Bacillus subtilis.</title>
        <authorList>
            <person name="Inaoka T."/>
            <person name="Takahashi K."/>
            <person name="Yada H."/>
            <person name="Yoshida M."/>
            <person name="Ochi K."/>
        </authorList>
    </citation>
    <scope>FUNCTION IN THE NEOTREHALOSADIAMINE BIOSYNTHESIS</scope>
    <scope>INDUCTION</scope>
    <source>
        <strain>168 / 61884</strain>
    </source>
</reference>
<reference key="5">
    <citation type="journal article" date="2007" name="J. Bacteriol.">
        <title>Glucose uptake pathway-specific regulation of synthesis of neotrehalosadiamine, a novel autoinducer produced in Bacillus subtilis.</title>
        <authorList>
            <person name="Inaoka T."/>
            <person name="Ochi K."/>
        </authorList>
    </citation>
    <scope>INDUCTION</scope>
    <source>
        <strain>168 / Marburg / ATCC 6051 / DSM 10 / JCM 1465 / NBRC 13719 / NCIMB 3610 / NRRL NRS-744 / VKM B-501</strain>
    </source>
</reference>
<reference key="6">
    <citation type="journal article" date="2013" name="J. Am. Chem. Soc.">
        <title>A previously unrecognized kanosamine biosynthesis pathway in Bacillus subtilis.</title>
        <authorList>
            <person name="Vetter N.D."/>
            <person name="Langill D.M."/>
            <person name="Anjum S."/>
            <person name="Boisvert-Martel J."/>
            <person name="Jagdhane R.C."/>
            <person name="Omene E."/>
            <person name="Zheng H."/>
            <person name="van Straaten K.E."/>
            <person name="Asiamah I."/>
            <person name="Krol E.S."/>
            <person name="Sanders D.A."/>
            <person name="Palmer D.R."/>
        </authorList>
    </citation>
    <scope>FUNCTION IN THE KANOSAMINE BIOSYNTHESIS AND AS A DEHYDROGENASE</scope>
    <scope>CATALYTIC ACTIVITY</scope>
    <scope>SUBSTRATE SPECIFICITY</scope>
</reference>
<feature type="chain" id="PRO_0000091777" description="Glucose-6-phosphate 3-dehydrogenase">
    <location>
        <begin position="1"/>
        <end position="350"/>
    </location>
</feature>
<feature type="sequence conflict" description="In Ref. 1; CAA74472." evidence="4" ref="1">
    <original>K</original>
    <variation>R</variation>
    <location>
        <position position="227"/>
    </location>
</feature>
<comment type="function">
    <text evidence="1 3">Involved in the biosynthesis of kanosamine (3-amino-3-deoxy-D-glucose), which is known to have antibiotic and antifungal properties, and to be a precursor of the antibiotic neotrehalosadiamine (3,3'-diamino-3,3'-dideoxy-alpha,beta-trehalose (NTD)). Catalyzes the oxidation of glucose 6-phosphate to 3-oxo-D-glucose 6-phosphate. It can only use NAD.</text>
</comment>
<comment type="catalytic activity">
    <reaction evidence="3">
        <text>D-glucose 6-phosphate + NAD(+) = 3-dehydro-D-glucose 6-phosphate + NADH + H(+)</text>
        <dbReference type="Rhea" id="RHEA:37547"/>
        <dbReference type="ChEBI" id="CHEBI:15378"/>
        <dbReference type="ChEBI" id="CHEBI:57540"/>
        <dbReference type="ChEBI" id="CHEBI:57945"/>
        <dbReference type="ChEBI" id="CHEBI:61548"/>
        <dbReference type="ChEBI" id="CHEBI:75052"/>
        <dbReference type="EC" id="1.1.1.361"/>
    </reaction>
</comment>
<comment type="pathway">
    <text>Antibiotic biosynthesis; kanosamine biosynthesis.</text>
</comment>
<comment type="induction">
    <text evidence="1 2">Induced by neotrehalosadiamine.</text>
</comment>
<comment type="miscellaneous">
    <text evidence="5">The production of neotrehalosadiamine is dormant in the wild-type strain. A mutation in the beta subunit of RNA polymerase activates the production of the neotrehalosadiamine (PubMed:14612444).</text>
</comment>
<comment type="similarity">
    <text evidence="4">Belongs to the Gfo/Idh/MocA family.</text>
</comment>
<proteinExistence type="evidence at protein level"/>
<keyword id="KW-0045">Antibiotic biosynthesis</keyword>
<keyword id="KW-0520">NAD</keyword>
<keyword id="KW-0560">Oxidoreductase</keyword>
<keyword id="KW-1185">Reference proteome</keyword>
<evidence type="ECO:0000269" key="1">
    <source>
    </source>
</evidence>
<evidence type="ECO:0000269" key="2">
    <source>
    </source>
</evidence>
<evidence type="ECO:0000269" key="3">
    <source>
    </source>
</evidence>
<evidence type="ECO:0000305" key="4"/>
<evidence type="ECO:0000305" key="5">
    <source>
    </source>
</evidence>
<name>NTDC_BACSU</name>